<protein>
    <recommendedName>
        <fullName evidence="8">Endothelin receptor type B</fullName>
        <shortName>ET-B</shortName>
        <shortName>ET-BR</shortName>
    </recommendedName>
    <alternativeName>
        <fullName>Endothelin receptor non-selective type</fullName>
    </alternativeName>
</protein>
<organism>
    <name type="scientific">Sus scrofa</name>
    <name type="common">Pig</name>
    <dbReference type="NCBI Taxonomy" id="9823"/>
    <lineage>
        <taxon>Eukaryota</taxon>
        <taxon>Metazoa</taxon>
        <taxon>Chordata</taxon>
        <taxon>Craniata</taxon>
        <taxon>Vertebrata</taxon>
        <taxon>Euteleostomi</taxon>
        <taxon>Mammalia</taxon>
        <taxon>Eutheria</taxon>
        <taxon>Laurasiatheria</taxon>
        <taxon>Artiodactyla</taxon>
        <taxon>Suina</taxon>
        <taxon>Suidae</taxon>
        <taxon>Sus</taxon>
    </lineage>
</organism>
<gene>
    <name type="primary">EDNRB</name>
</gene>
<dbReference type="EMBL" id="AB209953">
    <property type="protein sequence ID" value="BAE48719.1"/>
    <property type="molecule type" value="mRNA"/>
</dbReference>
<dbReference type="RefSeq" id="NP_001033091.1">
    <property type="nucleotide sequence ID" value="NM_001038002.1"/>
</dbReference>
<dbReference type="RefSeq" id="XP_005668533.1">
    <property type="nucleotide sequence ID" value="XM_005668476.3"/>
</dbReference>
<dbReference type="SMR" id="P35463"/>
<dbReference type="FunCoup" id="P35463">
    <property type="interactions" value="365"/>
</dbReference>
<dbReference type="STRING" id="9823.ENSSSCP00000010120"/>
<dbReference type="BindingDB" id="P35463"/>
<dbReference type="ChEMBL" id="CHEMBL3949"/>
<dbReference type="GlyCosmos" id="P35463">
    <property type="glycosylation" value="2 sites, No reported glycans"/>
</dbReference>
<dbReference type="GlyGen" id="P35463">
    <property type="glycosylation" value="3 sites"/>
</dbReference>
<dbReference type="PaxDb" id="9823-ENSSSCP00000010120"/>
<dbReference type="Ensembl" id="ENSSSCT00000010390.5">
    <property type="protein sequence ID" value="ENSSSCP00000010120.2"/>
    <property type="gene ID" value="ENSSSCG00000009477.6"/>
</dbReference>
<dbReference type="Ensembl" id="ENSSSCT00015084214.1">
    <property type="protein sequence ID" value="ENSSSCP00015034133.1"/>
    <property type="gene ID" value="ENSSSCG00015062748.1"/>
</dbReference>
<dbReference type="Ensembl" id="ENSSSCT00025007250.1">
    <property type="protein sequence ID" value="ENSSSCP00025002976.1"/>
    <property type="gene ID" value="ENSSSCG00025005370.1"/>
</dbReference>
<dbReference type="Ensembl" id="ENSSSCT00035021243.1">
    <property type="protein sequence ID" value="ENSSSCP00035007683.1"/>
    <property type="gene ID" value="ENSSSCG00035016595.1"/>
</dbReference>
<dbReference type="Ensembl" id="ENSSSCT00045059994.1">
    <property type="protein sequence ID" value="ENSSSCP00045042119.1"/>
    <property type="gene ID" value="ENSSSCG00045034860.1"/>
</dbReference>
<dbReference type="Ensembl" id="ENSSSCT00050090066.1">
    <property type="protein sequence ID" value="ENSSSCP00050038678.1"/>
    <property type="gene ID" value="ENSSSCG00050066108.1"/>
</dbReference>
<dbReference type="Ensembl" id="ENSSSCT00055049549.1">
    <property type="protein sequence ID" value="ENSSSCP00055039603.1"/>
    <property type="gene ID" value="ENSSSCG00055025001.1"/>
</dbReference>
<dbReference type="Ensembl" id="ENSSSCT00060038177.1">
    <property type="protein sequence ID" value="ENSSSCP00060016229.1"/>
    <property type="gene ID" value="ENSSSCG00060028213.1"/>
</dbReference>
<dbReference type="Ensembl" id="ENSSSCT00065082193.1">
    <property type="protein sequence ID" value="ENSSSCP00065035791.1"/>
    <property type="gene ID" value="ENSSSCG00065060011.1"/>
</dbReference>
<dbReference type="Ensembl" id="ENSSSCT00070042107.1">
    <property type="protein sequence ID" value="ENSSSCP00070035384.1"/>
    <property type="gene ID" value="ENSSSCG00070021181.1"/>
</dbReference>
<dbReference type="Ensembl" id="ENSSSCT00115007660">
    <property type="protein sequence ID" value="ENSSSCP00115007189"/>
    <property type="gene ID" value="ENSSSCG00115004460"/>
</dbReference>
<dbReference type="GeneID" id="414911"/>
<dbReference type="KEGG" id="ssc:414911"/>
<dbReference type="CTD" id="1910"/>
<dbReference type="VGNC" id="VGNC:87550">
    <property type="gene designation" value="EDNRB"/>
</dbReference>
<dbReference type="eggNOG" id="KOG3656">
    <property type="taxonomic scope" value="Eukaryota"/>
</dbReference>
<dbReference type="GeneTree" id="ENSGT01120000271837"/>
<dbReference type="HOGENOM" id="CLU_009579_28_0_1"/>
<dbReference type="InParanoid" id="P35463"/>
<dbReference type="OMA" id="YDQSDPN"/>
<dbReference type="OrthoDB" id="10037617at2759"/>
<dbReference type="TreeFam" id="TF331292"/>
<dbReference type="Reactome" id="R-SSC-375276">
    <property type="pathway name" value="Peptide ligand-binding receptors"/>
</dbReference>
<dbReference type="Reactome" id="R-SSC-416476">
    <property type="pathway name" value="G alpha (q) signalling events"/>
</dbReference>
<dbReference type="PRO" id="PR:P35463"/>
<dbReference type="Proteomes" id="UP000008227">
    <property type="component" value="Chromosome 11"/>
</dbReference>
<dbReference type="Proteomes" id="UP000314985">
    <property type="component" value="Chromosome 11"/>
</dbReference>
<dbReference type="Proteomes" id="UP000694570">
    <property type="component" value="Unplaced"/>
</dbReference>
<dbReference type="Proteomes" id="UP000694571">
    <property type="component" value="Unplaced"/>
</dbReference>
<dbReference type="Proteomes" id="UP000694720">
    <property type="component" value="Unplaced"/>
</dbReference>
<dbReference type="Proteomes" id="UP000694722">
    <property type="component" value="Unplaced"/>
</dbReference>
<dbReference type="Proteomes" id="UP000694723">
    <property type="component" value="Unplaced"/>
</dbReference>
<dbReference type="Proteomes" id="UP000694724">
    <property type="component" value="Unplaced"/>
</dbReference>
<dbReference type="Proteomes" id="UP000694725">
    <property type="component" value="Unplaced"/>
</dbReference>
<dbReference type="Proteomes" id="UP000694726">
    <property type="component" value="Unplaced"/>
</dbReference>
<dbReference type="Proteomes" id="UP000694727">
    <property type="component" value="Unplaced"/>
</dbReference>
<dbReference type="Proteomes" id="UP000694728">
    <property type="component" value="Unplaced"/>
</dbReference>
<dbReference type="Bgee" id="ENSSSCG00000009477">
    <property type="expression patterns" value="Expressed in cerebellum and 40 other cell types or tissues"/>
</dbReference>
<dbReference type="ExpressionAtlas" id="P35463">
    <property type="expression patterns" value="baseline and differential"/>
</dbReference>
<dbReference type="GO" id="GO:0005886">
    <property type="term" value="C:plasma membrane"/>
    <property type="evidence" value="ECO:0000250"/>
    <property type="project" value="UniProtKB"/>
</dbReference>
<dbReference type="GO" id="GO:0004962">
    <property type="term" value="F:endothelin receptor activity"/>
    <property type="evidence" value="ECO:0000250"/>
    <property type="project" value="UniProtKB"/>
</dbReference>
<dbReference type="GO" id="GO:0017046">
    <property type="term" value="F:peptide hormone binding"/>
    <property type="evidence" value="ECO:0007669"/>
    <property type="project" value="Ensembl"/>
</dbReference>
<dbReference type="GO" id="GO:0032341">
    <property type="term" value="P:aldosterone metabolic process"/>
    <property type="evidence" value="ECO:0007669"/>
    <property type="project" value="Ensembl"/>
</dbReference>
<dbReference type="GO" id="GO:0070588">
    <property type="term" value="P:calcium ion transmembrane transport"/>
    <property type="evidence" value="ECO:0007669"/>
    <property type="project" value="Ensembl"/>
</dbReference>
<dbReference type="GO" id="GO:0019722">
    <property type="term" value="P:calcium-mediated signaling"/>
    <property type="evidence" value="ECO:0000250"/>
    <property type="project" value="UniProtKB"/>
</dbReference>
<dbReference type="GO" id="GO:0060070">
    <property type="term" value="P:canonical Wnt signaling pathway"/>
    <property type="evidence" value="ECO:0007669"/>
    <property type="project" value="Ensembl"/>
</dbReference>
<dbReference type="GO" id="GO:0160093">
    <property type="term" value="P:chordate pharynx development"/>
    <property type="evidence" value="ECO:0007669"/>
    <property type="project" value="Ensembl"/>
</dbReference>
<dbReference type="GO" id="GO:0048066">
    <property type="term" value="P:developmental pigmentation"/>
    <property type="evidence" value="ECO:0000318"/>
    <property type="project" value="GO_Central"/>
</dbReference>
<dbReference type="GO" id="GO:0086100">
    <property type="term" value="P:endothelin receptor signaling pathway"/>
    <property type="evidence" value="ECO:0000250"/>
    <property type="project" value="UniProtKB"/>
</dbReference>
<dbReference type="GO" id="GO:0048484">
    <property type="term" value="P:enteric nervous system development"/>
    <property type="evidence" value="ECO:0007669"/>
    <property type="project" value="Ensembl"/>
</dbReference>
<dbReference type="GO" id="GO:0035645">
    <property type="term" value="P:enteric smooth muscle cell differentiation"/>
    <property type="evidence" value="ECO:0007669"/>
    <property type="project" value="Ensembl"/>
</dbReference>
<dbReference type="GO" id="GO:0061028">
    <property type="term" value="P:establishment of endothelial barrier"/>
    <property type="evidence" value="ECO:0007669"/>
    <property type="project" value="Ensembl"/>
</dbReference>
<dbReference type="GO" id="GO:0010467">
    <property type="term" value="P:gene expression"/>
    <property type="evidence" value="ECO:0007669"/>
    <property type="project" value="Ensembl"/>
</dbReference>
<dbReference type="GO" id="GO:0030202">
    <property type="term" value="P:heparin proteoglycan metabolic process"/>
    <property type="evidence" value="ECO:0007669"/>
    <property type="project" value="Ensembl"/>
</dbReference>
<dbReference type="GO" id="GO:0048246">
    <property type="term" value="P:macrophage chemotaxis"/>
    <property type="evidence" value="ECO:0007669"/>
    <property type="project" value="Ensembl"/>
</dbReference>
<dbReference type="GO" id="GO:0030318">
    <property type="term" value="P:melanocyte differentiation"/>
    <property type="evidence" value="ECO:0007669"/>
    <property type="project" value="Ensembl"/>
</dbReference>
<dbReference type="GO" id="GO:0014043">
    <property type="term" value="P:negative regulation of neuron maturation"/>
    <property type="evidence" value="ECO:0007669"/>
    <property type="project" value="Ensembl"/>
</dbReference>
<dbReference type="GO" id="GO:0051248">
    <property type="term" value="P:negative regulation of protein metabolic process"/>
    <property type="evidence" value="ECO:0007669"/>
    <property type="project" value="Ensembl"/>
</dbReference>
<dbReference type="GO" id="GO:0000122">
    <property type="term" value="P:negative regulation of transcription by RNA polymerase II"/>
    <property type="evidence" value="ECO:0007669"/>
    <property type="project" value="Ensembl"/>
</dbReference>
<dbReference type="GO" id="GO:0001755">
    <property type="term" value="P:neural crest cell migration"/>
    <property type="evidence" value="ECO:0007669"/>
    <property type="project" value="Ensembl"/>
</dbReference>
<dbReference type="GO" id="GO:0097402">
    <property type="term" value="P:neuroblast migration"/>
    <property type="evidence" value="ECO:0007669"/>
    <property type="project" value="Ensembl"/>
</dbReference>
<dbReference type="GO" id="GO:0007422">
    <property type="term" value="P:peripheral nervous system development"/>
    <property type="evidence" value="ECO:0007669"/>
    <property type="project" value="Ensembl"/>
</dbReference>
<dbReference type="GO" id="GO:0072112">
    <property type="term" value="P:podocyte differentiation"/>
    <property type="evidence" value="ECO:0007669"/>
    <property type="project" value="Ensembl"/>
</dbReference>
<dbReference type="GO" id="GO:0043123">
    <property type="term" value="P:positive regulation of canonical NF-kappaB signal transduction"/>
    <property type="evidence" value="ECO:0007669"/>
    <property type="project" value="Ensembl"/>
</dbReference>
<dbReference type="GO" id="GO:0007497">
    <property type="term" value="P:posterior midgut development"/>
    <property type="evidence" value="ECO:0007669"/>
    <property type="project" value="Ensembl"/>
</dbReference>
<dbReference type="GO" id="GO:0071806">
    <property type="term" value="P:protein transmembrane transport"/>
    <property type="evidence" value="ECO:0007669"/>
    <property type="project" value="Ensembl"/>
</dbReference>
<dbReference type="GO" id="GO:0002027">
    <property type="term" value="P:regulation of heart rate"/>
    <property type="evidence" value="ECO:0007669"/>
    <property type="project" value="Ensembl"/>
</dbReference>
<dbReference type="GO" id="GO:0006885">
    <property type="term" value="P:regulation of pH"/>
    <property type="evidence" value="ECO:0007669"/>
    <property type="project" value="Ensembl"/>
</dbReference>
<dbReference type="GO" id="GO:0097018">
    <property type="term" value="P:renal albumin absorption"/>
    <property type="evidence" value="ECO:0007669"/>
    <property type="project" value="Ensembl"/>
</dbReference>
<dbReference type="GO" id="GO:0035812">
    <property type="term" value="P:renal sodium excretion"/>
    <property type="evidence" value="ECO:0007669"/>
    <property type="project" value="Ensembl"/>
</dbReference>
<dbReference type="GO" id="GO:0070294">
    <property type="term" value="P:renal sodium ion absorption"/>
    <property type="evidence" value="ECO:0007669"/>
    <property type="project" value="Ensembl"/>
</dbReference>
<dbReference type="GO" id="GO:0002001">
    <property type="term" value="P:renin secretion into blood stream"/>
    <property type="evidence" value="ECO:0007669"/>
    <property type="project" value="Ensembl"/>
</dbReference>
<dbReference type="GO" id="GO:1904383">
    <property type="term" value="P:response to sodium phosphate"/>
    <property type="evidence" value="ECO:0007669"/>
    <property type="project" value="Ensembl"/>
</dbReference>
<dbReference type="GO" id="GO:0042310">
    <property type="term" value="P:vasoconstriction"/>
    <property type="evidence" value="ECO:0000318"/>
    <property type="project" value="GO_Central"/>
</dbReference>
<dbReference type="GO" id="GO:0014826">
    <property type="term" value="P:vein smooth muscle contraction"/>
    <property type="evidence" value="ECO:0007669"/>
    <property type="project" value="Ensembl"/>
</dbReference>
<dbReference type="CDD" id="cd15976">
    <property type="entry name" value="7tmA_ET-BR"/>
    <property type="match status" value="1"/>
</dbReference>
<dbReference type="FunFam" id="1.20.1070.10:FF:000076">
    <property type="entry name" value="Endothelin receptor type B"/>
    <property type="match status" value="1"/>
</dbReference>
<dbReference type="Gene3D" id="1.20.1070.10">
    <property type="entry name" value="Rhodopsin 7-helix transmembrane proteins"/>
    <property type="match status" value="1"/>
</dbReference>
<dbReference type="InterPro" id="IPR000499">
    <property type="entry name" value="Endthln_rcpt"/>
</dbReference>
<dbReference type="InterPro" id="IPR001112">
    <property type="entry name" value="ETB_rcpt"/>
</dbReference>
<dbReference type="InterPro" id="IPR051193">
    <property type="entry name" value="GPCR_endothelin_rcpt"/>
</dbReference>
<dbReference type="InterPro" id="IPR000276">
    <property type="entry name" value="GPCR_Rhodpsn"/>
</dbReference>
<dbReference type="InterPro" id="IPR017452">
    <property type="entry name" value="GPCR_Rhodpsn_7TM"/>
</dbReference>
<dbReference type="PANTHER" id="PTHR46099:SF3">
    <property type="entry name" value="ENDOTHELIN RECEPTOR TYPE B"/>
    <property type="match status" value="1"/>
</dbReference>
<dbReference type="PANTHER" id="PTHR46099">
    <property type="entry name" value="G_PROTEIN_RECEP_F1_2 DOMAIN-CONTAINING PROTEIN"/>
    <property type="match status" value="1"/>
</dbReference>
<dbReference type="Pfam" id="PF00001">
    <property type="entry name" value="7tm_1"/>
    <property type="match status" value="1"/>
</dbReference>
<dbReference type="PRINTS" id="PR00571">
    <property type="entry name" value="ENDOTHELINBR"/>
</dbReference>
<dbReference type="PRINTS" id="PR00366">
    <property type="entry name" value="ENDOTHELINR"/>
</dbReference>
<dbReference type="PRINTS" id="PR00237">
    <property type="entry name" value="GPCRRHODOPSN"/>
</dbReference>
<dbReference type="SMART" id="SM01381">
    <property type="entry name" value="7TM_GPCR_Srsx"/>
    <property type="match status" value="1"/>
</dbReference>
<dbReference type="SUPFAM" id="SSF81321">
    <property type="entry name" value="Family A G protein-coupled receptor-like"/>
    <property type="match status" value="1"/>
</dbReference>
<dbReference type="PROSITE" id="PS00237">
    <property type="entry name" value="G_PROTEIN_RECEP_F1_1"/>
    <property type="match status" value="1"/>
</dbReference>
<dbReference type="PROSITE" id="PS50262">
    <property type="entry name" value="G_PROTEIN_RECEP_F1_2"/>
    <property type="match status" value="1"/>
</dbReference>
<accession>P35463</accession>
<accession>Q2WG87</accession>
<evidence type="ECO:0000250" key="1"/>
<evidence type="ECO:0000250" key="2">
    <source>
        <dbReference type="UniProtKB" id="P24530"/>
    </source>
</evidence>
<evidence type="ECO:0000250" key="3">
    <source>
        <dbReference type="UniProtKB" id="P28088"/>
    </source>
</evidence>
<evidence type="ECO:0000255" key="4"/>
<evidence type="ECO:0000255" key="5">
    <source>
        <dbReference type="PROSITE-ProRule" id="PRU00521"/>
    </source>
</evidence>
<evidence type="ECO:0000256" key="6">
    <source>
        <dbReference type="SAM" id="MobiDB-lite"/>
    </source>
</evidence>
<evidence type="ECO:0000269" key="7">
    <source>
    </source>
</evidence>
<evidence type="ECO:0000305" key="8"/>
<reference key="1">
    <citation type="journal article" date="1992" name="Mol. Pharmacol.">
        <title>Molecular cloning and characterization of the major endothelin receptor subtype in porcine cerebellum.</title>
        <authorList>
            <person name="Elshourbagy N.A."/>
            <person name="Lee J.A."/>
            <person name="Korman D.R."/>
            <person name="Nuthalaganti P."/>
            <person name="Sylvester D.R."/>
            <person name="Dilella A.G."/>
            <person name="Sutiphong J.A."/>
            <person name="Kumar C.S."/>
        </authorList>
    </citation>
    <scope>NUCLEOTIDE SEQUENCE [MRNA]</scope>
    <source>
        <tissue>Brain</tissue>
    </source>
</reference>
<reference key="2">
    <citation type="journal article" date="2006" name="Anim. Genet.">
        <title>Sequencing, mapping and nucleotide variation of porcine coat color genes EDNRB, MYO5A, KITLG, SLC45A2, RAB27A, SILV and MITF.</title>
        <authorList>
            <person name="Okumura N."/>
            <person name="Hayashi T."/>
            <person name="Sekikawa H."/>
            <person name="Matsumoto T."/>
            <person name="Mikawa A."/>
            <person name="Hamasima N."/>
            <person name="Awata T."/>
        </authorList>
    </citation>
    <scope>NUCLEOTIDE SEQUENCE [MRNA]</scope>
    <scope>VARIANT SER-64</scope>
    <source>
        <tissue>Kidney</tissue>
    </source>
</reference>
<keyword id="KW-1003">Cell membrane</keyword>
<keyword id="KW-1015">Disulfide bond</keyword>
<keyword id="KW-0297">G-protein coupled receptor</keyword>
<keyword id="KW-0325">Glycoprotein</keyword>
<keyword id="KW-0449">Lipoprotein</keyword>
<keyword id="KW-0472">Membrane</keyword>
<keyword id="KW-0564">Palmitate</keyword>
<keyword id="KW-0597">Phosphoprotein</keyword>
<keyword id="KW-0675">Receptor</keyword>
<keyword id="KW-1185">Reference proteome</keyword>
<keyword id="KW-0732">Signal</keyword>
<keyword id="KW-0807">Transducer</keyword>
<keyword id="KW-0812">Transmembrane</keyword>
<keyword id="KW-1133">Transmembrane helix</keyword>
<comment type="function">
    <text>Non-specific receptor for endothelin 1, 2, and 3. Mediates its action by association with G proteins that activate a phosphatidylinositol-calcium second messenger system.</text>
</comment>
<comment type="subcellular location">
    <subcellularLocation>
        <location evidence="2">Cell membrane</location>
        <topology>Multi-pass membrane protein</topology>
    </subcellularLocation>
    <text evidence="2">internalized after activation by endothelins.</text>
</comment>
<comment type="similarity">
    <text evidence="5">Belongs to the G-protein coupled receptor 1 family. Endothelin receptor subfamily. EDNRB sub-subfamily.</text>
</comment>
<name>EDNRB_PIG</name>
<sequence length="443" mass="49595">MQPLRSLCGRALVALIFACGVAGVQSEERGFPPAGATPPALRTGEIVAPPTKTFWPRGSNASLPRSSSPPQMPKGGRMAGPPARTLTPPPCEGPIEIKDTFKYINTVVSCLVFVLGIIGNSTLLRIIYKNKCMRNGPNILIASLALGDLLHIIIDIPINVYKLLAEDWPFGVEMCKLVPFIQKASVGITVLSLCALSIDRYRAVASWSRIKGIGVPKWTAVEIVLIWVVSVVLAVPEALGFDMITTDYKGNRLRICLLHPTQKTAFMQFYKTAKDWWLFSFYFCLPLAITAFFYTLMTCEMLRKKSGMQIALNDHLKQRREVAKTVFCLVLVFALCWLPLHLSRILKLTLYDQNDSNRCELLSFLLVLDYIGINMASLNSCINPIALYLVSKRFKNCFKSCLCCWCQSFEEKQSLEEKQSCLKFKANDHGYDNFRSSNKYSSS</sequence>
<feature type="signal peptide" evidence="1">
    <location>
        <begin position="1"/>
        <end position="26"/>
    </location>
</feature>
<feature type="chain" id="PRO_0000012731" description="Endothelin receptor type B">
    <location>
        <begin position="27"/>
        <end position="443"/>
    </location>
</feature>
<feature type="topological domain" description="Extracellular" evidence="4">
    <location>
        <begin position="27"/>
        <end position="102"/>
    </location>
</feature>
<feature type="transmembrane region" description="Helical; Name=1" evidence="4">
    <location>
        <begin position="103"/>
        <end position="127"/>
    </location>
</feature>
<feature type="topological domain" description="Cytoplasmic" evidence="4">
    <location>
        <begin position="128"/>
        <end position="138"/>
    </location>
</feature>
<feature type="transmembrane region" description="Helical; Name=2" evidence="4">
    <location>
        <begin position="139"/>
        <end position="164"/>
    </location>
</feature>
<feature type="topological domain" description="Extracellular" evidence="4">
    <location>
        <begin position="165"/>
        <end position="176"/>
    </location>
</feature>
<feature type="transmembrane region" description="Helical; Name=3" evidence="4">
    <location>
        <begin position="177"/>
        <end position="198"/>
    </location>
</feature>
<feature type="topological domain" description="Cytoplasmic" evidence="4">
    <location>
        <begin position="199"/>
        <end position="219"/>
    </location>
</feature>
<feature type="transmembrane region" description="Helical; Name=4" evidence="4">
    <location>
        <begin position="220"/>
        <end position="244"/>
    </location>
</feature>
<feature type="topological domain" description="Extracellular" evidence="4">
    <location>
        <begin position="245"/>
        <end position="272"/>
    </location>
</feature>
<feature type="transmembrane region" description="Helical; Name=5" evidence="4">
    <location>
        <begin position="273"/>
        <end position="297"/>
    </location>
</feature>
<feature type="topological domain" description="Cytoplasmic" evidence="4">
    <location>
        <begin position="298"/>
        <end position="325"/>
    </location>
</feature>
<feature type="transmembrane region" description="Helical; Name=6" evidence="4">
    <location>
        <begin position="326"/>
        <end position="351"/>
    </location>
</feature>
<feature type="topological domain" description="Extracellular" evidence="4">
    <location>
        <begin position="352"/>
        <end position="363"/>
    </location>
</feature>
<feature type="transmembrane region" description="Helical; Name=7" evidence="4">
    <location>
        <begin position="364"/>
        <end position="390"/>
    </location>
</feature>
<feature type="topological domain" description="Cytoplasmic" evidence="4">
    <location>
        <begin position="391"/>
        <end position="443"/>
    </location>
</feature>
<feature type="region of interest" description="Disordered" evidence="6">
    <location>
        <begin position="53"/>
        <end position="89"/>
    </location>
</feature>
<feature type="compositionally biased region" description="Polar residues" evidence="6">
    <location>
        <begin position="59"/>
        <end position="69"/>
    </location>
</feature>
<feature type="modified residue" description="Phosphoserine" evidence="3">
    <location>
        <position position="306"/>
    </location>
</feature>
<feature type="modified residue" description="Phosphoserine" evidence="3">
    <location>
        <position position="420"/>
    </location>
</feature>
<feature type="modified residue" description="Phosphotyrosine" evidence="3">
    <location>
        <position position="440"/>
    </location>
</feature>
<feature type="modified residue" description="Phosphoserine" evidence="3">
    <location>
        <position position="441"/>
    </location>
</feature>
<feature type="modified residue" description="Phosphoserine" evidence="3">
    <location>
        <position position="442"/>
    </location>
</feature>
<feature type="modified residue" description="Phosphoserine" evidence="3">
    <location>
        <position position="443"/>
    </location>
</feature>
<feature type="lipid moiety-binding region" description="S-palmitoyl cysteine" evidence="4">
    <location>
        <position position="403"/>
    </location>
</feature>
<feature type="lipid moiety-binding region" description="S-palmitoyl cysteine" evidence="4">
    <location>
        <position position="404"/>
    </location>
</feature>
<feature type="lipid moiety-binding region" description="S-palmitoyl cysteine" evidence="4">
    <location>
        <position position="406"/>
    </location>
</feature>
<feature type="glycosylation site" description="N-linked (GlcNAc...) asparagine" evidence="4">
    <location>
        <position position="60"/>
    </location>
</feature>
<feature type="glycosylation site" description="N-linked (GlcNAc...) asparagine" evidence="4">
    <location>
        <position position="354"/>
    </location>
</feature>
<feature type="disulfide bond" evidence="5">
    <location>
        <begin position="175"/>
        <end position="256"/>
    </location>
</feature>
<feature type="sequence variant" evidence="7">
    <original>P</original>
    <variation>S</variation>
    <location>
        <position position="64"/>
    </location>
</feature>
<proteinExistence type="evidence at transcript level"/>